<organism>
    <name type="scientific">Salmonella dublin (strain CT_02021853)</name>
    <dbReference type="NCBI Taxonomy" id="439851"/>
    <lineage>
        <taxon>Bacteria</taxon>
        <taxon>Pseudomonadati</taxon>
        <taxon>Pseudomonadota</taxon>
        <taxon>Gammaproteobacteria</taxon>
        <taxon>Enterobacterales</taxon>
        <taxon>Enterobacteriaceae</taxon>
        <taxon>Salmonella</taxon>
    </lineage>
</organism>
<reference key="1">
    <citation type="journal article" date="2011" name="J. Bacteriol.">
        <title>Comparative genomics of 28 Salmonella enterica isolates: evidence for CRISPR-mediated adaptive sublineage evolution.</title>
        <authorList>
            <person name="Fricke W.F."/>
            <person name="Mammel M.K."/>
            <person name="McDermott P.F."/>
            <person name="Tartera C."/>
            <person name="White D.G."/>
            <person name="Leclerc J.E."/>
            <person name="Ravel J."/>
            <person name="Cebula T.A."/>
        </authorList>
    </citation>
    <scope>NUCLEOTIDE SEQUENCE [LARGE SCALE GENOMIC DNA]</scope>
    <source>
        <strain>CT_02021853</strain>
    </source>
</reference>
<dbReference type="EC" id="2.3.1.109" evidence="1"/>
<dbReference type="EMBL" id="CP001144">
    <property type="protein sequence ID" value="ACH76252.1"/>
    <property type="molecule type" value="Genomic_DNA"/>
</dbReference>
<dbReference type="RefSeq" id="WP_001263889.1">
    <property type="nucleotide sequence ID" value="NC_011205.1"/>
</dbReference>
<dbReference type="SMR" id="B5FJD7"/>
<dbReference type="KEGG" id="sed:SeD_A2042"/>
<dbReference type="HOGENOM" id="CLU_057655_0_0_6"/>
<dbReference type="UniPathway" id="UPA00185">
    <property type="reaction ID" value="UER00279"/>
</dbReference>
<dbReference type="Proteomes" id="UP000008322">
    <property type="component" value="Chromosome"/>
</dbReference>
<dbReference type="GO" id="GO:0008791">
    <property type="term" value="F:arginine N-succinyltransferase activity"/>
    <property type="evidence" value="ECO:0007669"/>
    <property type="project" value="UniProtKB-UniRule"/>
</dbReference>
<dbReference type="GO" id="GO:0019544">
    <property type="term" value="P:arginine catabolic process to glutamate"/>
    <property type="evidence" value="ECO:0007669"/>
    <property type="project" value="UniProtKB-UniRule"/>
</dbReference>
<dbReference type="GO" id="GO:0019545">
    <property type="term" value="P:arginine catabolic process to succinate"/>
    <property type="evidence" value="ECO:0007669"/>
    <property type="project" value="UniProtKB-UniRule"/>
</dbReference>
<dbReference type="Gene3D" id="2.40.40.20">
    <property type="match status" value="1"/>
</dbReference>
<dbReference type="Gene3D" id="3.40.630.30">
    <property type="match status" value="1"/>
</dbReference>
<dbReference type="HAMAP" id="MF_01171">
    <property type="entry name" value="AstA"/>
    <property type="match status" value="1"/>
</dbReference>
<dbReference type="InterPro" id="IPR016181">
    <property type="entry name" value="Acyl_CoA_acyltransferase"/>
</dbReference>
<dbReference type="InterPro" id="IPR007041">
    <property type="entry name" value="Arg_succinylTrfase_AstA/AruG"/>
</dbReference>
<dbReference type="InterPro" id="IPR017650">
    <property type="entry name" value="Arginine_N-succinylTrfase"/>
</dbReference>
<dbReference type="NCBIfam" id="TIGR03243">
    <property type="entry name" value="arg_catab_AOST"/>
    <property type="match status" value="1"/>
</dbReference>
<dbReference type="NCBIfam" id="TIGR03244">
    <property type="entry name" value="arg_catab_AstA"/>
    <property type="match status" value="1"/>
</dbReference>
<dbReference type="NCBIfam" id="NF007770">
    <property type="entry name" value="PRK10456.1"/>
    <property type="match status" value="1"/>
</dbReference>
<dbReference type="PANTHER" id="PTHR30420:SF1">
    <property type="entry name" value="ARGININE N-SUCCINYLTRANSFERASE"/>
    <property type="match status" value="1"/>
</dbReference>
<dbReference type="PANTHER" id="PTHR30420">
    <property type="entry name" value="N-SUCCINYLARGININE DIHYDROLASE"/>
    <property type="match status" value="1"/>
</dbReference>
<dbReference type="Pfam" id="PF04958">
    <property type="entry name" value="AstA"/>
    <property type="match status" value="1"/>
</dbReference>
<dbReference type="SUPFAM" id="SSF55729">
    <property type="entry name" value="Acyl-CoA N-acyltransferases (Nat)"/>
    <property type="match status" value="1"/>
</dbReference>
<comment type="function">
    <text evidence="1">Catalyzes the transfer of succinyl-CoA to arginine to produce N(2)-succinylarginine.</text>
</comment>
<comment type="catalytic activity">
    <reaction evidence="1">
        <text>succinyl-CoA + L-arginine = N(2)-succinyl-L-arginine + CoA + H(+)</text>
        <dbReference type="Rhea" id="RHEA:15185"/>
        <dbReference type="ChEBI" id="CHEBI:15378"/>
        <dbReference type="ChEBI" id="CHEBI:32682"/>
        <dbReference type="ChEBI" id="CHEBI:57287"/>
        <dbReference type="ChEBI" id="CHEBI:57292"/>
        <dbReference type="ChEBI" id="CHEBI:58241"/>
        <dbReference type="EC" id="2.3.1.109"/>
    </reaction>
</comment>
<comment type="pathway">
    <text evidence="1">Amino-acid degradation; L-arginine degradation via AST pathway; L-glutamate and succinate from L-arginine: step 1/5.</text>
</comment>
<comment type="similarity">
    <text evidence="1">Belongs to the arginine N-succinyltransferase family.</text>
</comment>
<sequence>MRVIRPVEHADIAALMQLAGKTGGGLTSLPANEATLAARIERALKTWSGELPKGEQGYVFVLEDSETGEVGGICAIEVAVGLNDPWYNYRVGTLVHASKELNVYNALPTLFLSNDHTGSSELCTLFLDPEWRKEGNGYLLSKSRFMFMAAFRDKFNEKVVAEMRGVIDEHGYSPFWQSLGKRFFSMDFSRADFLCGTGQKAFIAELMPKHPIYTHFLSEEAQAVIGEVHPQTAPARAVLEKEGFRYRHYIDIFDGGPTLECDIDRVRAIRKSRLVEVAEGQPAPGDYPACLVANENYHHFRAALVRADPQTSRLVLTAAQLDALKCRAGDHVRLVRLCAEEKTV</sequence>
<evidence type="ECO:0000255" key="1">
    <source>
        <dbReference type="HAMAP-Rule" id="MF_01171"/>
    </source>
</evidence>
<keyword id="KW-0012">Acyltransferase</keyword>
<keyword id="KW-0056">Arginine metabolism</keyword>
<keyword id="KW-0808">Transferase</keyword>
<name>ASTA_SALDC</name>
<gene>
    <name evidence="1" type="primary">astA</name>
    <name type="ordered locus">SeD_A2042</name>
</gene>
<proteinExistence type="inferred from homology"/>
<feature type="chain" id="PRO_1000137985" description="Arginine N-succinyltransferase">
    <location>
        <begin position="1"/>
        <end position="344"/>
    </location>
</feature>
<feature type="active site" description="Proton donor" evidence="1">
    <location>
        <position position="229"/>
    </location>
</feature>
<feature type="binding site" evidence="1">
    <location>
        <position position="125"/>
    </location>
    <ligand>
        <name>succinyl-CoA</name>
        <dbReference type="ChEBI" id="CHEBI:57292"/>
    </ligand>
</feature>
<protein>
    <recommendedName>
        <fullName evidence="1">Arginine N-succinyltransferase</fullName>
        <shortName evidence="1">AST</shortName>
        <ecNumber evidence="1">2.3.1.109</ecNumber>
    </recommendedName>
    <alternativeName>
        <fullName evidence="1">AOST</fullName>
    </alternativeName>
</protein>
<accession>B5FJD7</accession>